<dbReference type="EC" id="3.1.-.-" evidence="1"/>
<dbReference type="EMBL" id="AP008937">
    <property type="protein sequence ID" value="BAG26859.1"/>
    <property type="molecule type" value="Genomic_DNA"/>
</dbReference>
<dbReference type="RefSeq" id="WP_012390973.1">
    <property type="nucleotide sequence ID" value="NC_010610.1"/>
</dbReference>
<dbReference type="SMR" id="B2GB27"/>
<dbReference type="KEGG" id="lfe:LAF_0523"/>
<dbReference type="PATRIC" id="fig|334390.5.peg.567"/>
<dbReference type="eggNOG" id="COG0816">
    <property type="taxonomic scope" value="Bacteria"/>
</dbReference>
<dbReference type="HOGENOM" id="CLU_098240_2_0_9"/>
<dbReference type="Proteomes" id="UP000001697">
    <property type="component" value="Chromosome"/>
</dbReference>
<dbReference type="GO" id="GO:0005829">
    <property type="term" value="C:cytosol"/>
    <property type="evidence" value="ECO:0007669"/>
    <property type="project" value="TreeGrafter"/>
</dbReference>
<dbReference type="GO" id="GO:0004518">
    <property type="term" value="F:nuclease activity"/>
    <property type="evidence" value="ECO:0007669"/>
    <property type="project" value="UniProtKB-KW"/>
</dbReference>
<dbReference type="GO" id="GO:0000967">
    <property type="term" value="P:rRNA 5'-end processing"/>
    <property type="evidence" value="ECO:0007669"/>
    <property type="project" value="UniProtKB-UniRule"/>
</dbReference>
<dbReference type="CDD" id="cd16964">
    <property type="entry name" value="YqgF"/>
    <property type="match status" value="1"/>
</dbReference>
<dbReference type="Gene3D" id="3.30.420.140">
    <property type="entry name" value="YqgF/RNase H-like domain"/>
    <property type="match status" value="1"/>
</dbReference>
<dbReference type="HAMAP" id="MF_00651">
    <property type="entry name" value="Nuclease_YqgF"/>
    <property type="match status" value="1"/>
</dbReference>
<dbReference type="InterPro" id="IPR012337">
    <property type="entry name" value="RNaseH-like_sf"/>
</dbReference>
<dbReference type="InterPro" id="IPR005227">
    <property type="entry name" value="YqgF"/>
</dbReference>
<dbReference type="InterPro" id="IPR006641">
    <property type="entry name" value="YqgF/RNaseH-like_dom"/>
</dbReference>
<dbReference type="InterPro" id="IPR037027">
    <property type="entry name" value="YqgF/RNaseH-like_dom_sf"/>
</dbReference>
<dbReference type="NCBIfam" id="TIGR00250">
    <property type="entry name" value="RNAse_H_YqgF"/>
    <property type="match status" value="1"/>
</dbReference>
<dbReference type="PANTHER" id="PTHR33317">
    <property type="entry name" value="POLYNUCLEOTIDYL TRANSFERASE, RIBONUCLEASE H-LIKE SUPERFAMILY PROTEIN"/>
    <property type="match status" value="1"/>
</dbReference>
<dbReference type="PANTHER" id="PTHR33317:SF4">
    <property type="entry name" value="POLYNUCLEOTIDYL TRANSFERASE, RIBONUCLEASE H-LIKE SUPERFAMILY PROTEIN"/>
    <property type="match status" value="1"/>
</dbReference>
<dbReference type="Pfam" id="PF03652">
    <property type="entry name" value="RuvX"/>
    <property type="match status" value="1"/>
</dbReference>
<dbReference type="SMART" id="SM00732">
    <property type="entry name" value="YqgFc"/>
    <property type="match status" value="1"/>
</dbReference>
<dbReference type="SUPFAM" id="SSF53098">
    <property type="entry name" value="Ribonuclease H-like"/>
    <property type="match status" value="1"/>
</dbReference>
<accession>B2GB27</accession>
<keyword id="KW-0963">Cytoplasm</keyword>
<keyword id="KW-0378">Hydrolase</keyword>
<keyword id="KW-0540">Nuclease</keyword>
<keyword id="KW-1185">Reference proteome</keyword>
<keyword id="KW-0690">Ribosome biogenesis</keyword>
<feature type="chain" id="PRO_1000131044" description="Putative pre-16S rRNA nuclease">
    <location>
        <begin position="1"/>
        <end position="145"/>
    </location>
</feature>
<comment type="function">
    <text evidence="1">Could be a nuclease involved in processing of the 5'-end of pre-16S rRNA.</text>
</comment>
<comment type="subcellular location">
    <subcellularLocation>
        <location evidence="1">Cytoplasm</location>
    </subcellularLocation>
</comment>
<comment type="similarity">
    <text evidence="1">Belongs to the YqgF nuclease family.</text>
</comment>
<gene>
    <name type="ordered locus">LAF_0523</name>
</gene>
<organism>
    <name type="scientific">Limosilactobacillus fermentum (strain NBRC 3956 / LMG 18251)</name>
    <name type="common">Lactobacillus fermentum</name>
    <dbReference type="NCBI Taxonomy" id="334390"/>
    <lineage>
        <taxon>Bacteria</taxon>
        <taxon>Bacillati</taxon>
        <taxon>Bacillota</taxon>
        <taxon>Bacilli</taxon>
        <taxon>Lactobacillales</taxon>
        <taxon>Lactobacillaceae</taxon>
        <taxon>Limosilactobacillus</taxon>
    </lineage>
</organism>
<name>YQGF_LIMF3</name>
<sequence>MRLLGLDVGSKTVGVAESDPLGWTAQAVEIIPIDEEAEVFGLERVAELVKSRQVAGFVLGLPKNMNNTEGPRVEAARHYGELLEERFGLPIDYQDERLTTVQAHRMLVEEADVSRRKQKKVIDELAATLILQNYLDCHGKLCAKL</sequence>
<evidence type="ECO:0000255" key="1">
    <source>
        <dbReference type="HAMAP-Rule" id="MF_00651"/>
    </source>
</evidence>
<protein>
    <recommendedName>
        <fullName evidence="1">Putative pre-16S rRNA nuclease</fullName>
        <ecNumber evidence="1">3.1.-.-</ecNumber>
    </recommendedName>
</protein>
<proteinExistence type="inferred from homology"/>
<reference key="1">
    <citation type="journal article" date="2008" name="DNA Res.">
        <title>Comparative genome analysis of Lactobacillus reuteri and Lactobacillus fermentum reveal a genomic island for reuterin and cobalamin production.</title>
        <authorList>
            <person name="Morita H."/>
            <person name="Toh H."/>
            <person name="Fukuda S."/>
            <person name="Horikawa H."/>
            <person name="Oshima K."/>
            <person name="Suzuki T."/>
            <person name="Murakami M."/>
            <person name="Hisamatsu S."/>
            <person name="Kato Y."/>
            <person name="Takizawa T."/>
            <person name="Fukuoka H."/>
            <person name="Yoshimura T."/>
            <person name="Itoh K."/>
            <person name="O'Sullivan D.J."/>
            <person name="McKay L.L."/>
            <person name="Ohno H."/>
            <person name="Kikuchi J."/>
            <person name="Masaoka T."/>
            <person name="Hattori M."/>
        </authorList>
    </citation>
    <scope>NUCLEOTIDE SEQUENCE [LARGE SCALE GENOMIC DNA]</scope>
    <source>
        <strain>NBRC 3956 / LMG 18251</strain>
    </source>
</reference>